<protein>
    <recommendedName>
        <fullName evidence="1">Xylose isomerase</fullName>
        <ecNumber evidence="1">5.3.1.5</ecNumber>
    </recommendedName>
</protein>
<feature type="chain" id="PRO_1000026440" description="Xylose isomerase">
    <location>
        <begin position="1"/>
        <end position="440"/>
    </location>
</feature>
<feature type="active site" evidence="1">
    <location>
        <position position="101"/>
    </location>
</feature>
<feature type="active site" evidence="1">
    <location>
        <position position="104"/>
    </location>
</feature>
<feature type="binding site" evidence="1">
    <location>
        <position position="232"/>
    </location>
    <ligand>
        <name>Mg(2+)</name>
        <dbReference type="ChEBI" id="CHEBI:18420"/>
        <label>1</label>
    </ligand>
</feature>
<feature type="binding site" evidence="1">
    <location>
        <position position="268"/>
    </location>
    <ligand>
        <name>Mg(2+)</name>
        <dbReference type="ChEBI" id="CHEBI:18420"/>
        <label>1</label>
    </ligand>
</feature>
<feature type="binding site" evidence="1">
    <location>
        <position position="268"/>
    </location>
    <ligand>
        <name>Mg(2+)</name>
        <dbReference type="ChEBI" id="CHEBI:18420"/>
        <label>2</label>
    </ligand>
</feature>
<feature type="binding site" evidence="1">
    <location>
        <position position="271"/>
    </location>
    <ligand>
        <name>Mg(2+)</name>
        <dbReference type="ChEBI" id="CHEBI:18420"/>
        <label>2</label>
    </ligand>
</feature>
<feature type="binding site" evidence="1">
    <location>
        <position position="296"/>
    </location>
    <ligand>
        <name>Mg(2+)</name>
        <dbReference type="ChEBI" id="CHEBI:18420"/>
        <label>1</label>
    </ligand>
</feature>
<feature type="binding site" evidence="1">
    <location>
        <position position="307"/>
    </location>
    <ligand>
        <name>Mg(2+)</name>
        <dbReference type="ChEBI" id="CHEBI:18420"/>
        <label>2</label>
    </ligand>
</feature>
<feature type="binding site" evidence="1">
    <location>
        <position position="309"/>
    </location>
    <ligand>
        <name>Mg(2+)</name>
        <dbReference type="ChEBI" id="CHEBI:18420"/>
        <label>2</label>
    </ligand>
</feature>
<feature type="binding site" evidence="1">
    <location>
        <position position="339"/>
    </location>
    <ligand>
        <name>Mg(2+)</name>
        <dbReference type="ChEBI" id="CHEBI:18420"/>
        <label>1</label>
    </ligand>
</feature>
<evidence type="ECO:0000255" key="1">
    <source>
        <dbReference type="HAMAP-Rule" id="MF_00455"/>
    </source>
</evidence>
<sequence length="440" mass="49854">MPTYFDQLERVRYEGPKTTNLLAFRHYNPDELVAGKRMEDHLRFAACYWHTFCWNGSDMFGVGAFERPWQQAGDALSLAKRKADVAFEFFHKLNVPYYCFHDVDVSPEGASLKEYLNNFAQMVEVLAQKQQESGVKLLWGTANCFTHPRYGAGAATNPDPEVFSWAATQVVTAMNATHQLGGENYVLWGGREGYETLLNTDLRQEREQLGRFMQMVVEHKHKTGFRGTLLIEPKPQEPTKHQYDYDAATVYGFLKQFGLEKEIKLNIEANHATLAGHSFHHEIASAIALGLFGSVDANRGDPQLGWDTDQFPNSVEENALVMYEILKAGGFTTGGLNFDAKVRRQSTDKYDLFYGHIGAMDTMALSLKVAAKMLEEGELDKRVARRYAGWNGELGQQILKGQMTLAELAQYAEQHNLAPQHQSGHQEQLENLVNYYLFDK</sequence>
<keyword id="KW-0119">Carbohydrate metabolism</keyword>
<keyword id="KW-0963">Cytoplasm</keyword>
<keyword id="KW-0413">Isomerase</keyword>
<keyword id="KW-0460">Magnesium</keyword>
<keyword id="KW-0479">Metal-binding</keyword>
<keyword id="KW-1185">Reference proteome</keyword>
<keyword id="KW-0859">Xylose metabolism</keyword>
<gene>
    <name evidence="1" type="primary">xylA</name>
    <name type="ordered locus">ESA_04162</name>
</gene>
<comment type="catalytic activity">
    <reaction evidence="1">
        <text>alpha-D-xylose = alpha-D-xylulofuranose</text>
        <dbReference type="Rhea" id="RHEA:22816"/>
        <dbReference type="ChEBI" id="CHEBI:28518"/>
        <dbReference type="ChEBI" id="CHEBI:188998"/>
        <dbReference type="EC" id="5.3.1.5"/>
    </reaction>
</comment>
<comment type="cofactor">
    <cofactor evidence="1">
        <name>Mg(2+)</name>
        <dbReference type="ChEBI" id="CHEBI:18420"/>
    </cofactor>
    <text evidence="1">Binds 2 magnesium ions per subunit.</text>
</comment>
<comment type="subunit">
    <text evidence="1">Homotetramer.</text>
</comment>
<comment type="subcellular location">
    <subcellularLocation>
        <location evidence="1">Cytoplasm</location>
    </subcellularLocation>
</comment>
<comment type="similarity">
    <text evidence="1">Belongs to the xylose isomerase family.</text>
</comment>
<name>XYLA_CROS8</name>
<reference key="1">
    <citation type="journal article" date="2010" name="PLoS ONE">
        <title>Genome sequence of Cronobacter sakazakii BAA-894 and comparative genomic hybridization analysis with other Cronobacter species.</title>
        <authorList>
            <person name="Kucerova E."/>
            <person name="Clifton S.W."/>
            <person name="Xia X.Q."/>
            <person name="Long F."/>
            <person name="Porwollik S."/>
            <person name="Fulton L."/>
            <person name="Fronick C."/>
            <person name="Minx P."/>
            <person name="Kyung K."/>
            <person name="Warren W."/>
            <person name="Fulton R."/>
            <person name="Feng D."/>
            <person name="Wollam A."/>
            <person name="Shah N."/>
            <person name="Bhonagiri V."/>
            <person name="Nash W.E."/>
            <person name="Hallsworth-Pepin K."/>
            <person name="Wilson R.K."/>
            <person name="McClelland M."/>
            <person name="Forsythe S.J."/>
        </authorList>
    </citation>
    <scope>NUCLEOTIDE SEQUENCE [LARGE SCALE GENOMIC DNA]</scope>
    <source>
        <strain>ATCC BAA-894</strain>
    </source>
</reference>
<proteinExistence type="inferred from homology"/>
<accession>A7MNI5</accession>
<dbReference type="EC" id="5.3.1.5" evidence="1"/>
<dbReference type="EMBL" id="CP000783">
    <property type="protein sequence ID" value="ABU79343.1"/>
    <property type="molecule type" value="Genomic_DNA"/>
</dbReference>
<dbReference type="RefSeq" id="WP_012126287.1">
    <property type="nucleotide sequence ID" value="NC_009778.1"/>
</dbReference>
<dbReference type="SMR" id="A7MNI5"/>
<dbReference type="KEGG" id="esa:ESA_04162"/>
<dbReference type="PATRIC" id="fig|290339.8.peg.3701"/>
<dbReference type="HOGENOM" id="CLU_037261_1_0_6"/>
<dbReference type="Proteomes" id="UP000000260">
    <property type="component" value="Chromosome"/>
</dbReference>
<dbReference type="GO" id="GO:0005737">
    <property type="term" value="C:cytoplasm"/>
    <property type="evidence" value="ECO:0007669"/>
    <property type="project" value="UniProtKB-SubCell"/>
</dbReference>
<dbReference type="GO" id="GO:0000287">
    <property type="term" value="F:magnesium ion binding"/>
    <property type="evidence" value="ECO:0007669"/>
    <property type="project" value="UniProtKB-UniRule"/>
</dbReference>
<dbReference type="GO" id="GO:0009045">
    <property type="term" value="F:xylose isomerase activity"/>
    <property type="evidence" value="ECO:0007669"/>
    <property type="project" value="UniProtKB-UniRule"/>
</dbReference>
<dbReference type="GO" id="GO:0042732">
    <property type="term" value="P:D-xylose metabolic process"/>
    <property type="evidence" value="ECO:0007669"/>
    <property type="project" value="UniProtKB-UniRule"/>
</dbReference>
<dbReference type="FunFam" id="3.20.20.150:FF:000002">
    <property type="entry name" value="Xylose isomerase"/>
    <property type="match status" value="1"/>
</dbReference>
<dbReference type="Gene3D" id="3.20.20.150">
    <property type="entry name" value="Divalent-metal-dependent TIM barrel enzymes"/>
    <property type="match status" value="1"/>
</dbReference>
<dbReference type="HAMAP" id="MF_00455">
    <property type="entry name" value="Xylose_isom_A"/>
    <property type="match status" value="1"/>
</dbReference>
<dbReference type="InterPro" id="IPR036237">
    <property type="entry name" value="Xyl_isomerase-like_sf"/>
</dbReference>
<dbReference type="InterPro" id="IPR013452">
    <property type="entry name" value="Xylose_isom_bac"/>
</dbReference>
<dbReference type="InterPro" id="IPR001998">
    <property type="entry name" value="Xylose_isomerase"/>
</dbReference>
<dbReference type="NCBIfam" id="NF003998">
    <property type="entry name" value="PRK05474.1"/>
    <property type="match status" value="1"/>
</dbReference>
<dbReference type="NCBIfam" id="TIGR02630">
    <property type="entry name" value="xylose_isom_A"/>
    <property type="match status" value="1"/>
</dbReference>
<dbReference type="PANTHER" id="PTHR48408">
    <property type="match status" value="1"/>
</dbReference>
<dbReference type="PANTHER" id="PTHR48408:SF1">
    <property type="entry name" value="XYLOSE ISOMERASE"/>
    <property type="match status" value="1"/>
</dbReference>
<dbReference type="PRINTS" id="PR00688">
    <property type="entry name" value="XYLOSISMRASE"/>
</dbReference>
<dbReference type="SUPFAM" id="SSF51658">
    <property type="entry name" value="Xylose isomerase-like"/>
    <property type="match status" value="1"/>
</dbReference>
<dbReference type="PROSITE" id="PS51415">
    <property type="entry name" value="XYLOSE_ISOMERASE"/>
    <property type="match status" value="1"/>
</dbReference>
<organism>
    <name type="scientific">Cronobacter sakazakii (strain ATCC BAA-894)</name>
    <name type="common">Enterobacter sakazakii</name>
    <dbReference type="NCBI Taxonomy" id="290339"/>
    <lineage>
        <taxon>Bacteria</taxon>
        <taxon>Pseudomonadati</taxon>
        <taxon>Pseudomonadota</taxon>
        <taxon>Gammaproteobacteria</taxon>
        <taxon>Enterobacterales</taxon>
        <taxon>Enterobacteriaceae</taxon>
        <taxon>Cronobacter</taxon>
    </lineage>
</organism>